<gene>
    <name evidence="13 17" type="primary">Ythdf2</name>
</gene>
<reference key="1">
    <citation type="journal article" date="2005" name="Science">
        <title>The transcriptional landscape of the mammalian genome.</title>
        <authorList>
            <person name="Carninci P."/>
            <person name="Kasukawa T."/>
            <person name="Katayama S."/>
            <person name="Gough J."/>
            <person name="Frith M.C."/>
            <person name="Maeda N."/>
            <person name="Oyama R."/>
            <person name="Ravasi T."/>
            <person name="Lenhard B."/>
            <person name="Wells C."/>
            <person name="Kodzius R."/>
            <person name="Shimokawa K."/>
            <person name="Bajic V.B."/>
            <person name="Brenner S.E."/>
            <person name="Batalov S."/>
            <person name="Forrest A.R."/>
            <person name="Zavolan M."/>
            <person name="Davis M.J."/>
            <person name="Wilming L.G."/>
            <person name="Aidinis V."/>
            <person name="Allen J.E."/>
            <person name="Ambesi-Impiombato A."/>
            <person name="Apweiler R."/>
            <person name="Aturaliya R.N."/>
            <person name="Bailey T.L."/>
            <person name="Bansal M."/>
            <person name="Baxter L."/>
            <person name="Beisel K.W."/>
            <person name="Bersano T."/>
            <person name="Bono H."/>
            <person name="Chalk A.M."/>
            <person name="Chiu K.P."/>
            <person name="Choudhary V."/>
            <person name="Christoffels A."/>
            <person name="Clutterbuck D.R."/>
            <person name="Crowe M.L."/>
            <person name="Dalla E."/>
            <person name="Dalrymple B.P."/>
            <person name="de Bono B."/>
            <person name="Della Gatta G."/>
            <person name="di Bernardo D."/>
            <person name="Down T."/>
            <person name="Engstrom P."/>
            <person name="Fagiolini M."/>
            <person name="Faulkner G."/>
            <person name="Fletcher C.F."/>
            <person name="Fukushima T."/>
            <person name="Furuno M."/>
            <person name="Futaki S."/>
            <person name="Gariboldi M."/>
            <person name="Georgii-Hemming P."/>
            <person name="Gingeras T.R."/>
            <person name="Gojobori T."/>
            <person name="Green R.E."/>
            <person name="Gustincich S."/>
            <person name="Harbers M."/>
            <person name="Hayashi Y."/>
            <person name="Hensch T.K."/>
            <person name="Hirokawa N."/>
            <person name="Hill D."/>
            <person name="Huminiecki L."/>
            <person name="Iacono M."/>
            <person name="Ikeo K."/>
            <person name="Iwama A."/>
            <person name="Ishikawa T."/>
            <person name="Jakt M."/>
            <person name="Kanapin A."/>
            <person name="Katoh M."/>
            <person name="Kawasawa Y."/>
            <person name="Kelso J."/>
            <person name="Kitamura H."/>
            <person name="Kitano H."/>
            <person name="Kollias G."/>
            <person name="Krishnan S.P."/>
            <person name="Kruger A."/>
            <person name="Kummerfeld S.K."/>
            <person name="Kurochkin I.V."/>
            <person name="Lareau L.F."/>
            <person name="Lazarevic D."/>
            <person name="Lipovich L."/>
            <person name="Liu J."/>
            <person name="Liuni S."/>
            <person name="McWilliam S."/>
            <person name="Madan Babu M."/>
            <person name="Madera M."/>
            <person name="Marchionni L."/>
            <person name="Matsuda H."/>
            <person name="Matsuzawa S."/>
            <person name="Miki H."/>
            <person name="Mignone F."/>
            <person name="Miyake S."/>
            <person name="Morris K."/>
            <person name="Mottagui-Tabar S."/>
            <person name="Mulder N."/>
            <person name="Nakano N."/>
            <person name="Nakauchi H."/>
            <person name="Ng P."/>
            <person name="Nilsson R."/>
            <person name="Nishiguchi S."/>
            <person name="Nishikawa S."/>
            <person name="Nori F."/>
            <person name="Ohara O."/>
            <person name="Okazaki Y."/>
            <person name="Orlando V."/>
            <person name="Pang K.C."/>
            <person name="Pavan W.J."/>
            <person name="Pavesi G."/>
            <person name="Pesole G."/>
            <person name="Petrovsky N."/>
            <person name="Piazza S."/>
            <person name="Reed J."/>
            <person name="Reid J.F."/>
            <person name="Ring B.Z."/>
            <person name="Ringwald M."/>
            <person name="Rost B."/>
            <person name="Ruan Y."/>
            <person name="Salzberg S.L."/>
            <person name="Sandelin A."/>
            <person name="Schneider C."/>
            <person name="Schoenbach C."/>
            <person name="Sekiguchi K."/>
            <person name="Semple C.A."/>
            <person name="Seno S."/>
            <person name="Sessa L."/>
            <person name="Sheng Y."/>
            <person name="Shibata Y."/>
            <person name="Shimada H."/>
            <person name="Shimada K."/>
            <person name="Silva D."/>
            <person name="Sinclair B."/>
            <person name="Sperling S."/>
            <person name="Stupka E."/>
            <person name="Sugiura K."/>
            <person name="Sultana R."/>
            <person name="Takenaka Y."/>
            <person name="Taki K."/>
            <person name="Tammoja K."/>
            <person name="Tan S.L."/>
            <person name="Tang S."/>
            <person name="Taylor M.S."/>
            <person name="Tegner J."/>
            <person name="Teichmann S.A."/>
            <person name="Ueda H.R."/>
            <person name="van Nimwegen E."/>
            <person name="Verardo R."/>
            <person name="Wei C.L."/>
            <person name="Yagi K."/>
            <person name="Yamanishi H."/>
            <person name="Zabarovsky E."/>
            <person name="Zhu S."/>
            <person name="Zimmer A."/>
            <person name="Hide W."/>
            <person name="Bult C."/>
            <person name="Grimmond S.M."/>
            <person name="Teasdale R.D."/>
            <person name="Liu E.T."/>
            <person name="Brusic V."/>
            <person name="Quackenbush J."/>
            <person name="Wahlestedt C."/>
            <person name="Mattick J.S."/>
            <person name="Hume D.A."/>
            <person name="Kai C."/>
            <person name="Sasaki D."/>
            <person name="Tomaru Y."/>
            <person name="Fukuda S."/>
            <person name="Kanamori-Katayama M."/>
            <person name="Suzuki M."/>
            <person name="Aoki J."/>
            <person name="Arakawa T."/>
            <person name="Iida J."/>
            <person name="Imamura K."/>
            <person name="Itoh M."/>
            <person name="Kato T."/>
            <person name="Kawaji H."/>
            <person name="Kawagashira N."/>
            <person name="Kawashima T."/>
            <person name="Kojima M."/>
            <person name="Kondo S."/>
            <person name="Konno H."/>
            <person name="Nakano K."/>
            <person name="Ninomiya N."/>
            <person name="Nishio T."/>
            <person name="Okada M."/>
            <person name="Plessy C."/>
            <person name="Shibata K."/>
            <person name="Shiraki T."/>
            <person name="Suzuki S."/>
            <person name="Tagami M."/>
            <person name="Waki K."/>
            <person name="Watahiki A."/>
            <person name="Okamura-Oho Y."/>
            <person name="Suzuki H."/>
            <person name="Kawai J."/>
            <person name="Hayashizaki Y."/>
        </authorList>
    </citation>
    <scope>NUCLEOTIDE SEQUENCE [LARGE SCALE MRNA]</scope>
    <source>
        <strain>C57BL/6J</strain>
        <tissue>Embryo</tissue>
        <tissue>Testis</tissue>
    </source>
</reference>
<reference key="2">
    <citation type="journal article" date="2009" name="PLoS Biol.">
        <title>Lineage-specific biology revealed by a finished genome assembly of the mouse.</title>
        <authorList>
            <person name="Church D.M."/>
            <person name="Goodstadt L."/>
            <person name="Hillier L.W."/>
            <person name="Zody M.C."/>
            <person name="Goldstein S."/>
            <person name="She X."/>
            <person name="Bult C.J."/>
            <person name="Agarwala R."/>
            <person name="Cherry J.L."/>
            <person name="DiCuccio M."/>
            <person name="Hlavina W."/>
            <person name="Kapustin Y."/>
            <person name="Meric P."/>
            <person name="Maglott D."/>
            <person name="Birtle Z."/>
            <person name="Marques A.C."/>
            <person name="Graves T."/>
            <person name="Zhou S."/>
            <person name="Teague B."/>
            <person name="Potamousis K."/>
            <person name="Churas C."/>
            <person name="Place M."/>
            <person name="Herschleb J."/>
            <person name="Runnheim R."/>
            <person name="Forrest D."/>
            <person name="Amos-Landgraf J."/>
            <person name="Schwartz D.C."/>
            <person name="Cheng Z."/>
            <person name="Lindblad-Toh K."/>
            <person name="Eichler E.E."/>
            <person name="Ponting C.P."/>
        </authorList>
    </citation>
    <scope>NUCLEOTIDE SEQUENCE [LARGE SCALE GENOMIC DNA]</scope>
    <source>
        <strain>C57BL/6J</strain>
    </source>
</reference>
<reference key="3">
    <citation type="submission" date="2005-09" db="EMBL/GenBank/DDBJ databases">
        <authorList>
            <person name="Mural R.J."/>
            <person name="Adams M.D."/>
            <person name="Myers E.W."/>
            <person name="Smith H.O."/>
            <person name="Venter J.C."/>
        </authorList>
    </citation>
    <scope>NUCLEOTIDE SEQUENCE [LARGE SCALE GENOMIC DNA]</scope>
</reference>
<reference key="4">
    <citation type="journal article" date="2004" name="Genome Res.">
        <title>The status, quality, and expansion of the NIH full-length cDNA project: the Mammalian Gene Collection (MGC).</title>
        <authorList>
            <consortium name="The MGC Project Team"/>
        </authorList>
    </citation>
    <scope>NUCLEOTIDE SEQUENCE [LARGE SCALE MRNA]</scope>
    <source>
        <tissue>Mammary tumor</tissue>
    </source>
</reference>
<reference key="5">
    <citation type="journal article" date="2010" name="Cell">
        <title>A tissue-specific atlas of mouse protein phosphorylation and expression.</title>
        <authorList>
            <person name="Huttlin E.L."/>
            <person name="Jedrychowski M.P."/>
            <person name="Elias J.E."/>
            <person name="Goswami T."/>
            <person name="Rad R."/>
            <person name="Beausoleil S.A."/>
            <person name="Villen J."/>
            <person name="Haas W."/>
            <person name="Sowa M.E."/>
            <person name="Gygi S.P."/>
        </authorList>
    </citation>
    <scope>IDENTIFICATION BY MASS SPECTROMETRY [LARGE SCALE ANALYSIS]</scope>
    <source>
        <tissue>Kidney</tissue>
        <tissue>Spleen</tissue>
    </source>
</reference>
<reference key="6">
    <citation type="journal article" date="2017" name="Mol. Cell">
        <title>The RNA m(6)A reader YTHDF2 is essential for the post-transcriptional regulation of the maternal transcriptome and oocyte competence.</title>
        <authorList>
            <person name="Ivanova I."/>
            <person name="Much C."/>
            <person name="Di Giacomo M."/>
            <person name="Azzi C."/>
            <person name="Morgan M."/>
            <person name="Moreira P.N."/>
            <person name="Monahan J."/>
            <person name="Carrieri C."/>
            <person name="Enright A.J."/>
            <person name="O'Carroll D."/>
        </authorList>
    </citation>
    <scope>FUNCTION</scope>
    <scope>SUBCELLULAR LOCATION</scope>
    <scope>TISSUE SPECIFICITY</scope>
    <scope>DEVELOPMENTAL STAGE</scope>
    <scope>DISRUPTION PHENOTYPE</scope>
</reference>
<reference key="7">
    <citation type="journal article" date="2018" name="Cell Res.">
        <title>Suppression of m6A reader Ythdf2 promotes hematopoietic stem cell expansion.</title>
        <authorList>
            <person name="Li Z."/>
            <person name="Qian P."/>
            <person name="Shao W."/>
            <person name="Shi H."/>
            <person name="He X.C."/>
            <person name="Gogol M."/>
            <person name="Yu Z."/>
            <person name="Wang Y."/>
            <person name="Qi M."/>
            <person name="Zhu Y."/>
            <person name="Perry J.M."/>
            <person name="Zhang K."/>
            <person name="Tao F."/>
            <person name="Zhou K."/>
            <person name="Hu D."/>
            <person name="Han Y."/>
            <person name="Zhao C."/>
            <person name="Alexander R."/>
            <person name="Xu H."/>
            <person name="Chen S."/>
            <person name="Peak A."/>
            <person name="Hall K."/>
            <person name="Peterson M."/>
            <person name="Perera A."/>
            <person name="Haug J.S."/>
            <person name="Parmely T."/>
            <person name="Li H."/>
            <person name="Shen B."/>
            <person name="Zeitlinger J."/>
            <person name="He C."/>
            <person name="Li L."/>
        </authorList>
    </citation>
    <scope>FUNCTION</scope>
    <scope>DISRUPTION PHENOTYPE</scope>
</reference>
<reference key="8">
    <citation type="journal article" date="2018" name="Cell Res.">
        <title>Loss of YTHDF2-mediated m6A-dependent mRNA clearance facilitates hematopoietic stem cell regeneration.</title>
        <authorList>
            <person name="Wang H."/>
            <person name="Zuo H."/>
            <person name="Liu J."/>
            <person name="Wen F."/>
            <person name="Gao Y."/>
            <person name="Zhu X."/>
            <person name="Liu B."/>
            <person name="Xiao F."/>
            <person name="Wang W."/>
            <person name="Huang G."/>
            <person name="Shen B."/>
            <person name="Ju Z."/>
        </authorList>
    </citation>
    <scope>FUNCTION</scope>
    <scope>DISRUPTION PHENOTYPE</scope>
</reference>
<reference key="9">
    <citation type="journal article" date="2018" name="Genome Biol.">
        <title>Ythdf2-mediated m6A mRNA clearance modulates neural development in mice.</title>
        <authorList>
            <person name="Li M."/>
            <person name="Zhao X."/>
            <person name="Wang W."/>
            <person name="Shi H."/>
            <person name="Pan Q."/>
            <person name="Lu Z."/>
            <person name="Perez S.P."/>
            <person name="Suganthan R."/>
            <person name="He C."/>
            <person name="Bjoeraas M."/>
            <person name="Klungland A."/>
        </authorList>
    </citation>
    <scope>FUNCTION</scope>
    <scope>DISRUPTION PHENOTYPE</scope>
</reference>
<reference key="10">
    <citation type="journal article" date="2019" name="Nat. Immunol.">
        <title>m6A modification controls the innate immune response to infection by targeting type I interferons.</title>
        <authorList>
            <person name="Winkler R."/>
            <person name="Gillis E."/>
            <person name="Lasman L."/>
            <person name="Safra M."/>
            <person name="Geula S."/>
            <person name="Soyris C."/>
            <person name="Nachshon A."/>
            <person name="Tai-Schmiedel J."/>
            <person name="Friedman N."/>
            <person name="Le-Trilling V.T.K."/>
            <person name="Trilling M."/>
            <person name="Mandelboim M."/>
            <person name="Hanna J.H."/>
            <person name="Schwartz S."/>
            <person name="Stern-Ginossar N."/>
        </authorList>
    </citation>
    <scope>FUNCTION</scope>
</reference>
<reference key="11">
    <citation type="journal article" date="2020" name="Cell Rep.">
        <title>YTHDF2/3 are required for somatic reprogramming through different RNA deadenylation pathways.</title>
        <authorList>
            <person name="Liu J."/>
            <person name="Gao M."/>
            <person name="Xu S."/>
            <person name="Chen Y."/>
            <person name="Wu K."/>
            <person name="Liu H."/>
            <person name="Wang J."/>
            <person name="Yang X."/>
            <person name="Wang J."/>
            <person name="Liu W."/>
            <person name="Bao X."/>
            <person name="Chen J."/>
        </authorList>
    </citation>
    <scope>FUNCTION</scope>
    <scope>INTERACTION WITH CNOT1</scope>
</reference>
<reference key="12">
    <citation type="journal article" date="2020" name="Cell Death Dis.">
        <title>YTHDF2 promotes spermagonial adhesion through modulating MMPs decay via m6A/mRNA pathway.</title>
        <authorList>
            <person name="Huang T."/>
            <person name="Liu Z."/>
            <person name="Zheng Y."/>
            <person name="Feng T."/>
            <person name="Gao Q."/>
            <person name="Zeng W."/>
        </authorList>
    </citation>
    <scope>FUNCTION</scope>
    <scope>DISRUPTION PHENOTYPE</scope>
</reference>
<reference key="13">
    <citation type="journal article" date="2020" name="Genes Dev.">
        <title>Context-dependent functional compensation between Ythdf m6A reader proteins.</title>
        <authorList>
            <person name="Lasman L."/>
            <person name="Krupalnik V."/>
            <person name="Viukov S."/>
            <person name="Mor N."/>
            <person name="Aguilera-Castrejon A."/>
            <person name="Schneir D."/>
            <person name="Bayerl J."/>
            <person name="Mizrahi O."/>
            <person name="Peles S."/>
            <person name="Tawil S."/>
            <person name="Sathe S."/>
            <person name="Nachshon A."/>
            <person name="Shani T."/>
            <person name="Zerbib M."/>
            <person name="Kilimnik I."/>
            <person name="Aigner S."/>
            <person name="Shankar A."/>
            <person name="Mueller J.R."/>
            <person name="Schwartz S."/>
            <person name="Stern-Ginossar N."/>
            <person name="Yeo G.W."/>
            <person name="Geula S."/>
            <person name="Novershtern N."/>
            <person name="Hanna J.H."/>
        </authorList>
    </citation>
    <scope>FUNCTION</scope>
    <scope>SUBCELLULAR LOCATION</scope>
    <scope>DISRUPTION PHENOTYPE</scope>
</reference>
<name>YTHD2_MOUSE</name>
<evidence type="ECO:0000250" key="1">
    <source>
        <dbReference type="UniProtKB" id="Q7Z739"/>
    </source>
</evidence>
<evidence type="ECO:0000250" key="2">
    <source>
        <dbReference type="UniProtKB" id="Q9Y5A9"/>
    </source>
</evidence>
<evidence type="ECO:0000255" key="3">
    <source>
        <dbReference type="PROSITE-ProRule" id="PRU00225"/>
    </source>
</evidence>
<evidence type="ECO:0000256" key="4">
    <source>
        <dbReference type="SAM" id="MobiDB-lite"/>
    </source>
</evidence>
<evidence type="ECO:0000269" key="5">
    <source>
    </source>
</evidence>
<evidence type="ECO:0000269" key="6">
    <source>
    </source>
</evidence>
<evidence type="ECO:0000269" key="7">
    <source>
    </source>
</evidence>
<evidence type="ECO:0000269" key="8">
    <source>
    </source>
</evidence>
<evidence type="ECO:0000269" key="9">
    <source>
    </source>
</evidence>
<evidence type="ECO:0000269" key="10">
    <source>
    </source>
</evidence>
<evidence type="ECO:0000269" key="11">
    <source>
    </source>
</evidence>
<evidence type="ECO:0000269" key="12">
    <source>
    </source>
</evidence>
<evidence type="ECO:0000303" key="13">
    <source>
    </source>
</evidence>
<evidence type="ECO:0000305" key="14"/>
<evidence type="ECO:0000305" key="15">
    <source>
    </source>
</evidence>
<evidence type="ECO:0000305" key="16">
    <source>
    </source>
</evidence>
<evidence type="ECO:0000312" key="17">
    <source>
        <dbReference type="MGI" id="MGI:2444233"/>
    </source>
</evidence>
<feature type="initiator methionine" description="Removed" evidence="2">
    <location>
        <position position="1"/>
    </location>
</feature>
<feature type="chain" id="PRO_0000425544" description="YTH domain-containing family protein 2">
    <location>
        <begin position="2"/>
        <end position="579"/>
    </location>
</feature>
<feature type="domain" description="YTH" evidence="3">
    <location>
        <begin position="410"/>
        <end position="544"/>
    </location>
</feature>
<feature type="region of interest" description="Disordered" evidence="4">
    <location>
        <begin position="1"/>
        <end position="45"/>
    </location>
</feature>
<feature type="region of interest" description="Localization to mRNA processing bodies (P-bodies)" evidence="2">
    <location>
        <begin position="2"/>
        <end position="384"/>
    </location>
</feature>
<feature type="region of interest" description="Disordered" evidence="4">
    <location>
        <begin position="247"/>
        <end position="387"/>
    </location>
</feature>
<feature type="region of interest" description="Interaction with m6A-containing mRNAs" evidence="2">
    <location>
        <begin position="385"/>
        <end position="579"/>
    </location>
</feature>
<feature type="compositionally biased region" description="Polar residues" evidence="4">
    <location>
        <begin position="291"/>
        <end position="316"/>
    </location>
</feature>
<feature type="compositionally biased region" description="Low complexity" evidence="4">
    <location>
        <begin position="337"/>
        <end position="349"/>
    </location>
</feature>
<feature type="compositionally biased region" description="Gly residues" evidence="4">
    <location>
        <begin position="359"/>
        <end position="371"/>
    </location>
</feature>
<feature type="compositionally biased region" description="Polar residues" evidence="4">
    <location>
        <begin position="372"/>
        <end position="383"/>
    </location>
</feature>
<feature type="binding site" evidence="2">
    <location>
        <begin position="416"/>
        <end position="418"/>
    </location>
    <ligand>
        <name>RNA</name>
        <dbReference type="ChEBI" id="CHEBI:33697"/>
    </ligand>
    <ligandPart>
        <name>N(6)-methyladenosine 5'-phosphate residue</name>
        <dbReference type="ChEBI" id="CHEBI:74449"/>
    </ligandPart>
</feature>
<feature type="binding site" evidence="2">
    <location>
        <position position="422"/>
    </location>
    <ligand>
        <name>RNA</name>
        <dbReference type="ChEBI" id="CHEBI:33697"/>
    </ligand>
    <ligandPart>
        <name>N(6)-methyladenosine 5'-phosphate residue</name>
        <dbReference type="ChEBI" id="CHEBI:74449"/>
    </ligandPart>
</feature>
<feature type="binding site" evidence="2">
    <location>
        <begin position="432"/>
        <end position="433"/>
    </location>
    <ligand>
        <name>RNA</name>
        <dbReference type="ChEBI" id="CHEBI:33697"/>
    </ligand>
    <ligandPart>
        <name>N(6)-methyladenosine 5'-phosphate residue</name>
        <dbReference type="ChEBI" id="CHEBI:74449"/>
    </ligandPart>
</feature>
<feature type="binding site" evidence="2">
    <location>
        <position position="462"/>
    </location>
    <ligand>
        <name>RNA</name>
        <dbReference type="ChEBI" id="CHEBI:33697"/>
    </ligand>
    <ligandPart>
        <name>N(6)-methyladenosine 5'-phosphate residue</name>
        <dbReference type="ChEBI" id="CHEBI:74449"/>
    </ligandPart>
</feature>
<feature type="binding site" evidence="2">
    <location>
        <position position="486"/>
    </location>
    <ligand>
        <name>RNA</name>
        <dbReference type="ChEBI" id="CHEBI:33697"/>
    </ligand>
    <ligandPart>
        <name>N(6)-methyladenosine 5'-phosphate residue</name>
        <dbReference type="ChEBI" id="CHEBI:74449"/>
    </ligandPart>
</feature>
<feature type="binding site" evidence="2">
    <location>
        <position position="491"/>
    </location>
    <ligand>
        <name>RNA</name>
        <dbReference type="ChEBI" id="CHEBI:33697"/>
    </ligand>
    <ligandPart>
        <name>N(6)-methyladenosine 5'-phosphate residue</name>
        <dbReference type="ChEBI" id="CHEBI:74449"/>
    </ligandPart>
</feature>
<feature type="modified residue" description="N-acetylserine" evidence="2">
    <location>
        <position position="2"/>
    </location>
</feature>
<feature type="modified residue" description="Phosphoserine" evidence="2">
    <location>
        <position position="2"/>
    </location>
</feature>
<feature type="modified residue" description="Phosphoserine" evidence="2">
    <location>
        <position position="4"/>
    </location>
</feature>
<feature type="modified residue" description="Phosphoserine" evidence="2">
    <location>
        <position position="5"/>
    </location>
</feature>
<feature type="modified residue" description="Phosphoserine" evidence="1">
    <location>
        <position position="22"/>
    </location>
</feature>
<feature type="modified residue" description="Phosphoserine" evidence="2">
    <location>
        <position position="39"/>
    </location>
</feature>
<feature type="modified residue" description="Phosphoserine" evidence="2">
    <location>
        <position position="196"/>
    </location>
</feature>
<feature type="modified residue" description="Phosphoserine" evidence="2">
    <location>
        <position position="359"/>
    </location>
</feature>
<feature type="modified residue" description="Phosphoserine" evidence="2">
    <location>
        <position position="394"/>
    </location>
</feature>
<feature type="sequence conflict" description="In Ref. 4; AAH28994." evidence="14" ref="4">
    <original>A</original>
    <variation>P</variation>
    <location>
        <position position="82"/>
    </location>
</feature>
<feature type="sequence conflict" description="In Ref. 1; BAE35173." evidence="14" ref="1">
    <original>I</original>
    <variation>V</variation>
    <location>
        <position position="165"/>
    </location>
</feature>
<feature type="sequence conflict" description="In Ref. 1; BAE35173." evidence="14" ref="1">
    <original>A</original>
    <variation>V</variation>
    <location>
        <position position="210"/>
    </location>
</feature>
<feature type="sequence conflict" description="In Ref. 1; BAC28785." evidence="14" ref="1">
    <original>Q</original>
    <variation>R</variation>
    <location>
        <position position="309"/>
    </location>
</feature>
<keyword id="KW-0007">Acetylation</keyword>
<keyword id="KW-0131">Cell cycle</keyword>
<keyword id="KW-0132">Cell division</keyword>
<keyword id="KW-0963">Cytoplasm</keyword>
<keyword id="KW-0221">Differentiation</keyword>
<keyword id="KW-0391">Immunity</keyword>
<keyword id="KW-0399">Innate immunity</keyword>
<keyword id="KW-0498">Mitosis</keyword>
<keyword id="KW-0539">Nucleus</keyword>
<keyword id="KW-0896">Oogenesis</keyword>
<keyword id="KW-0597">Phosphoprotein</keyword>
<keyword id="KW-1185">Reference proteome</keyword>
<keyword id="KW-0694">RNA-binding</keyword>
<keyword id="KW-0744">Spermatogenesis</keyword>
<keyword id="KW-0832">Ubl conjugation</keyword>
<dbReference type="EMBL" id="AK031616">
    <property type="protein sequence ID" value="BAC27480.1"/>
    <property type="molecule type" value="mRNA"/>
</dbReference>
<dbReference type="EMBL" id="AK034655">
    <property type="protein sequence ID" value="BAC28785.1"/>
    <property type="molecule type" value="mRNA"/>
</dbReference>
<dbReference type="EMBL" id="AK083882">
    <property type="protein sequence ID" value="BAC39048.1"/>
    <property type="molecule type" value="mRNA"/>
</dbReference>
<dbReference type="EMBL" id="AK150350">
    <property type="protein sequence ID" value="BAE29487.1"/>
    <property type="molecule type" value="mRNA"/>
</dbReference>
<dbReference type="EMBL" id="AK150669">
    <property type="protein sequence ID" value="BAE29751.1"/>
    <property type="molecule type" value="mRNA"/>
</dbReference>
<dbReference type="EMBL" id="AK151392">
    <property type="protein sequence ID" value="BAE30361.1"/>
    <property type="molecule type" value="mRNA"/>
</dbReference>
<dbReference type="EMBL" id="AK151862">
    <property type="protein sequence ID" value="BAE30751.1"/>
    <property type="molecule type" value="mRNA"/>
</dbReference>
<dbReference type="EMBL" id="AK159548">
    <property type="protein sequence ID" value="BAE35173.1"/>
    <property type="molecule type" value="mRNA"/>
</dbReference>
<dbReference type="EMBL" id="BX537301">
    <property type="status" value="NOT_ANNOTATED_CDS"/>
    <property type="molecule type" value="Genomic_DNA"/>
</dbReference>
<dbReference type="EMBL" id="CH466552">
    <property type="protein sequence ID" value="EDL30120.1"/>
    <property type="molecule type" value="Genomic_DNA"/>
</dbReference>
<dbReference type="EMBL" id="BC014797">
    <property type="protein sequence ID" value="AAH14797.1"/>
    <property type="molecule type" value="mRNA"/>
</dbReference>
<dbReference type="EMBL" id="BC028994">
    <property type="protein sequence ID" value="AAH28994.1"/>
    <property type="molecule type" value="mRNA"/>
</dbReference>
<dbReference type="CCDS" id="CCDS18719.1"/>
<dbReference type="RefSeq" id="NP_663368.3">
    <property type="nucleotide sequence ID" value="NM_145393.4"/>
</dbReference>
<dbReference type="SMR" id="Q91YT7"/>
<dbReference type="BioGRID" id="229450">
    <property type="interactions" value="13"/>
</dbReference>
<dbReference type="FunCoup" id="Q91YT7">
    <property type="interactions" value="4888"/>
</dbReference>
<dbReference type="IntAct" id="Q91YT7">
    <property type="interactions" value="2"/>
</dbReference>
<dbReference type="STRING" id="10090.ENSMUSP00000120414"/>
<dbReference type="GlyGen" id="Q91YT7">
    <property type="glycosylation" value="4 sites, 1 O-linked glycan (3 sites)"/>
</dbReference>
<dbReference type="iPTMnet" id="Q91YT7"/>
<dbReference type="PhosphoSitePlus" id="Q91YT7"/>
<dbReference type="jPOST" id="Q91YT7"/>
<dbReference type="PaxDb" id="10090-ENSMUSP00000120414"/>
<dbReference type="PeptideAtlas" id="Q91YT7"/>
<dbReference type="ProteomicsDB" id="298484"/>
<dbReference type="Pumba" id="Q91YT7"/>
<dbReference type="Antibodypedia" id="30989">
    <property type="antibodies" value="147 antibodies from 28 providers"/>
</dbReference>
<dbReference type="DNASU" id="213541"/>
<dbReference type="Ensembl" id="ENSMUST00000152796.8">
    <property type="protein sequence ID" value="ENSMUSP00000120414.2"/>
    <property type="gene ID" value="ENSMUSG00000040025.18"/>
</dbReference>
<dbReference type="GeneID" id="213541"/>
<dbReference type="KEGG" id="mmu:213541"/>
<dbReference type="UCSC" id="uc008vas.2">
    <property type="organism name" value="mouse"/>
</dbReference>
<dbReference type="AGR" id="MGI:2444233"/>
<dbReference type="CTD" id="51441"/>
<dbReference type="MGI" id="MGI:2444233">
    <property type="gene designation" value="Ythdf2"/>
</dbReference>
<dbReference type="VEuPathDB" id="HostDB:ENSMUSG00000040025"/>
<dbReference type="eggNOG" id="KOG1901">
    <property type="taxonomic scope" value="Eukaryota"/>
</dbReference>
<dbReference type="GeneTree" id="ENSGT00940000156761"/>
<dbReference type="HOGENOM" id="CLU_022715_0_0_1"/>
<dbReference type="InParanoid" id="Q91YT7"/>
<dbReference type="OMA" id="SPQARPX"/>
<dbReference type="OrthoDB" id="306690at2759"/>
<dbReference type="PhylomeDB" id="Q91YT7"/>
<dbReference type="TreeFam" id="TF323736"/>
<dbReference type="BioGRID-ORCS" id="213541">
    <property type="hits" value="16 hits in 76 CRISPR screens"/>
</dbReference>
<dbReference type="CD-CODE" id="CE726F99">
    <property type="entry name" value="Postsynaptic density"/>
</dbReference>
<dbReference type="ChiTaRS" id="Ythdf2">
    <property type="organism name" value="mouse"/>
</dbReference>
<dbReference type="PRO" id="PR:Q91YT7"/>
<dbReference type="Proteomes" id="UP000000589">
    <property type="component" value="Chromosome 4"/>
</dbReference>
<dbReference type="RNAct" id="Q91YT7">
    <property type="molecule type" value="protein"/>
</dbReference>
<dbReference type="Bgee" id="ENSMUSG00000040025">
    <property type="expression patterns" value="Expressed in maxillary prominence and 256 other cell types or tissues"/>
</dbReference>
<dbReference type="ExpressionAtlas" id="Q91YT7">
    <property type="expression patterns" value="baseline and differential"/>
</dbReference>
<dbReference type="GO" id="GO:0034451">
    <property type="term" value="C:centriolar satellite"/>
    <property type="evidence" value="ECO:0007669"/>
    <property type="project" value="Ensembl"/>
</dbReference>
<dbReference type="GO" id="GO:0005737">
    <property type="term" value="C:cytoplasm"/>
    <property type="evidence" value="ECO:0000314"/>
    <property type="project" value="UniProtKB"/>
</dbReference>
<dbReference type="GO" id="GO:0010494">
    <property type="term" value="C:cytoplasmic stress granule"/>
    <property type="evidence" value="ECO:0000250"/>
    <property type="project" value="UniProtKB"/>
</dbReference>
<dbReference type="GO" id="GO:0005829">
    <property type="term" value="C:cytosol"/>
    <property type="evidence" value="ECO:0000250"/>
    <property type="project" value="UniProtKB"/>
</dbReference>
<dbReference type="GO" id="GO:0005634">
    <property type="term" value="C:nucleus"/>
    <property type="evidence" value="ECO:0000315"/>
    <property type="project" value="UniProtKB"/>
</dbReference>
<dbReference type="GO" id="GO:0000932">
    <property type="term" value="C:P-body"/>
    <property type="evidence" value="ECO:0000250"/>
    <property type="project" value="UniProtKB"/>
</dbReference>
<dbReference type="GO" id="GO:0062153">
    <property type="term" value="F:C5-methylcytidine-containing RNA reader activity"/>
    <property type="evidence" value="ECO:0000250"/>
    <property type="project" value="UniProtKB"/>
</dbReference>
<dbReference type="GO" id="GO:1990247">
    <property type="term" value="F:N6-methyladenosine-containing RNA reader activity"/>
    <property type="evidence" value="ECO:0000315"/>
    <property type="project" value="UniProtKB"/>
</dbReference>
<dbReference type="GO" id="GO:0003723">
    <property type="term" value="F:RNA binding"/>
    <property type="evidence" value="ECO:0007669"/>
    <property type="project" value="UniProtKB-KW"/>
</dbReference>
<dbReference type="GO" id="GO:0048598">
    <property type="term" value="P:embryonic morphogenesis"/>
    <property type="evidence" value="ECO:0000250"/>
    <property type="project" value="UniProtKB"/>
</dbReference>
<dbReference type="GO" id="GO:0098508">
    <property type="term" value="P:endothelial to hematopoietic transition"/>
    <property type="evidence" value="ECO:0000250"/>
    <property type="project" value="UniProtKB"/>
</dbReference>
<dbReference type="GO" id="GO:0007276">
    <property type="term" value="P:gamete generation"/>
    <property type="evidence" value="ECO:0000315"/>
    <property type="project" value="UniProtKB"/>
</dbReference>
<dbReference type="GO" id="GO:0071425">
    <property type="term" value="P:hematopoietic stem cell proliferation"/>
    <property type="evidence" value="ECO:0000315"/>
    <property type="project" value="UniProtKB"/>
</dbReference>
<dbReference type="GO" id="GO:0045087">
    <property type="term" value="P:innate immune response"/>
    <property type="evidence" value="ECO:0007669"/>
    <property type="project" value="UniProtKB-KW"/>
</dbReference>
<dbReference type="GO" id="GO:0006402">
    <property type="term" value="P:mRNA catabolic process"/>
    <property type="evidence" value="ECO:0000315"/>
    <property type="project" value="UniProtKB"/>
</dbReference>
<dbReference type="GO" id="GO:0061157">
    <property type="term" value="P:mRNA destabilization"/>
    <property type="evidence" value="ECO:0000315"/>
    <property type="project" value="UniProtKB"/>
</dbReference>
<dbReference type="GO" id="GO:0045746">
    <property type="term" value="P:negative regulation of Notch signaling pathway"/>
    <property type="evidence" value="ECO:0000250"/>
    <property type="project" value="UniProtKB"/>
</dbReference>
<dbReference type="GO" id="GO:2000737">
    <property type="term" value="P:negative regulation of stem cell differentiation"/>
    <property type="evidence" value="ECO:0000250"/>
    <property type="project" value="UniProtKB"/>
</dbReference>
<dbReference type="GO" id="GO:0060339">
    <property type="term" value="P:negative regulation of type I interferon-mediated signaling pathway"/>
    <property type="evidence" value="ECO:0000250"/>
    <property type="project" value="UniProtKB"/>
</dbReference>
<dbReference type="GO" id="GO:0001556">
    <property type="term" value="P:oocyte maturation"/>
    <property type="evidence" value="ECO:0000315"/>
    <property type="project" value="UniProtKB"/>
</dbReference>
<dbReference type="GO" id="GO:0070925">
    <property type="term" value="P:organelle assembly"/>
    <property type="evidence" value="ECO:0000250"/>
    <property type="project" value="UniProtKB"/>
</dbReference>
<dbReference type="GO" id="GO:1903679">
    <property type="term" value="P:positive regulation of cap-independent translational initiation"/>
    <property type="evidence" value="ECO:0000250"/>
    <property type="project" value="UniProtKB"/>
</dbReference>
<dbReference type="GO" id="GO:0030155">
    <property type="term" value="P:regulation of cell adhesion"/>
    <property type="evidence" value="ECO:0000315"/>
    <property type="project" value="UniProtKB"/>
</dbReference>
<dbReference type="GO" id="GO:1902036">
    <property type="term" value="P:regulation of hematopoietic stem cell differentiation"/>
    <property type="evidence" value="ECO:0000315"/>
    <property type="project" value="UniProtKB"/>
</dbReference>
<dbReference type="GO" id="GO:1903538">
    <property type="term" value="P:regulation of meiotic cell cycle process involved in oocyte maturation"/>
    <property type="evidence" value="ECO:0000315"/>
    <property type="project" value="UniProtKB"/>
</dbReference>
<dbReference type="GO" id="GO:0043488">
    <property type="term" value="P:regulation of mRNA stability"/>
    <property type="evidence" value="ECO:0000315"/>
    <property type="project" value="UniProtKB"/>
</dbReference>
<dbReference type="GO" id="GO:0050767">
    <property type="term" value="P:regulation of neurogenesis"/>
    <property type="evidence" value="ECO:0000315"/>
    <property type="project" value="UniProtKB"/>
</dbReference>
<dbReference type="GO" id="GO:2000232">
    <property type="term" value="P:regulation of rRNA processing"/>
    <property type="evidence" value="ECO:0000250"/>
    <property type="project" value="UniProtKB"/>
</dbReference>
<dbReference type="GO" id="GO:0007284">
    <property type="term" value="P:spermatogonial cell division"/>
    <property type="evidence" value="ECO:0000315"/>
    <property type="project" value="UniProtKB"/>
</dbReference>
<dbReference type="GO" id="GO:0034063">
    <property type="term" value="P:stress granule assembly"/>
    <property type="evidence" value="ECO:0000250"/>
    <property type="project" value="UniProtKB"/>
</dbReference>
<dbReference type="CDD" id="cd21134">
    <property type="entry name" value="YTH"/>
    <property type="match status" value="1"/>
</dbReference>
<dbReference type="FunFam" id="3.10.590.10:FF:000001">
    <property type="entry name" value="YTH domain family 1, isoform CRA_a"/>
    <property type="match status" value="1"/>
</dbReference>
<dbReference type="Gene3D" id="3.10.590.10">
    <property type="entry name" value="ph1033 like domains"/>
    <property type="match status" value="1"/>
</dbReference>
<dbReference type="InterPro" id="IPR007275">
    <property type="entry name" value="YTH_domain"/>
</dbReference>
<dbReference type="InterPro" id="IPR045168">
    <property type="entry name" value="YTH_prot"/>
</dbReference>
<dbReference type="PANTHER" id="PTHR12357:SF8">
    <property type="entry name" value="YTH DOMAIN-CONTAINING FAMILY PROTEIN 2"/>
    <property type="match status" value="1"/>
</dbReference>
<dbReference type="PANTHER" id="PTHR12357">
    <property type="entry name" value="YTH YT521-B HOMOLOGY DOMAIN-CONTAINING"/>
    <property type="match status" value="1"/>
</dbReference>
<dbReference type="Pfam" id="PF04146">
    <property type="entry name" value="YTH"/>
    <property type="match status" value="1"/>
</dbReference>
<dbReference type="PROSITE" id="PS50882">
    <property type="entry name" value="YTH"/>
    <property type="match status" value="1"/>
</dbReference>
<organism>
    <name type="scientific">Mus musculus</name>
    <name type="common">Mouse</name>
    <dbReference type="NCBI Taxonomy" id="10090"/>
    <lineage>
        <taxon>Eukaryota</taxon>
        <taxon>Metazoa</taxon>
        <taxon>Chordata</taxon>
        <taxon>Craniata</taxon>
        <taxon>Vertebrata</taxon>
        <taxon>Euteleostomi</taxon>
        <taxon>Mammalia</taxon>
        <taxon>Eutheria</taxon>
        <taxon>Euarchontoglires</taxon>
        <taxon>Glires</taxon>
        <taxon>Rodentia</taxon>
        <taxon>Myomorpha</taxon>
        <taxon>Muroidea</taxon>
        <taxon>Muridae</taxon>
        <taxon>Murinae</taxon>
        <taxon>Mus</taxon>
        <taxon>Mus</taxon>
    </lineage>
</organism>
<accession>Q91YT7</accession>
<accession>Q3TWU3</accession>
<accession>Q8BM70</accession>
<accession>Q8K325</accession>
<comment type="function">
    <text evidence="2 5 6 7 8 9 10 11 12">Specifically recognizes and binds N6-methyladenosine (m6A)-containing RNAs, and regulates their stability (PubMed:28867294, PubMed:29855337, PubMed:32943573). M6A is a modification present at internal sites of mRNAs and some non-coding RNAs and plays a role in mRNA stability and processing (PubMed:28867294, PubMed:29855337, PubMed:32943573). Acts as a regulator of mRNA stability by promoting degradation of m6A-containing mRNAs via interaction with the CCR4-NOT and ribonuclease P/MRP complexes, depending on the context (PubMed:29855337, PubMed:30065315, PubMed:32905781, PubMed:32943573). The YTHDF paralogs (YTHDF1, YTHDF2 and YTHDF3) share m6A-containing mRNAs targets and act redundantly to mediate mRNA degradation and cellular differentiation (PubMed:32943573). M6A-containing mRNAs containing a binding site for RIDA/HRSP12 (5'-GGUUC-3') are preferentially degraded by endoribonucleolytic cleavage: cooperative binding of RIDA/HRSP12 and YTHDF2 to transcripts leads to recruitment of the ribonuclease P/MRP complex (By similarity). Other m6A-containing mRNAs undergo deadenylation via direct interaction between YTHDF2 and CNOT1, leading to recruitment of the CCR4-NOT and subsequent deadenylation of m6A-containing mRNAs (PubMed:32905781). Required maternally to regulate oocyte maturation: probably acts by binding to m6A-containing mRNAs, thereby regulating maternal transcript dosage during oocyte maturation, which is essential for the competence of oocytes to sustain early zygotic development (PubMed:28867294). Also required during spermatogenesis: regulates spermagonial adhesion by promoting degradation of m6A-containing transcripts coding for matrix metallopeptidases (PubMed:31959747). Also involved in hematopoietic stem cells specification by binding to m6A-containing mRNAs, leading to promote their degradation (PubMed:30065315, PubMed:30150673). Also acts as a regulator of neural development by promoting m6A-dependent degradation of neural development-related mRNA targets (PubMed:29855337). Inhibits neural specification of induced pluripotent stem cells by binding to methylated neural-specific mRNAs and promoting their degradation, thereby restraining neural differentiation (By similarity). Regulates circadian regulation of hepatic lipid metabolism: acts by promoting m6A-dependent degradation of PPARA transcripts (By similarity). Regulates the innate immune response to infection by inhibiting the type I interferon response: acts by binding to m6A-containing IFNB transcripts and promoting their degradation (PubMed:30559377). May also act as a promoter of cap-independent mRNA translation following heat shock stress: upon stress, relocalizes to the nucleus and specifically binds mRNAs with some m6A methylation mark at their 5'-UTR, protecting demethylation of mRNAs by FTO, thereby promoting cap-independent mRNA translation (By similarity). Regulates mitotic entry by promoting the phase-specific m6A-dependent degradation of WEE1 transcripts (By similarity). Promotes formation of phase-separated membraneless compartments, such as P-bodies or stress granules, by undergoing liquid-liquid phase separation upon binding to mRNAs containing multiple m6A-modified residues: polymethylated mRNAs act as a multivalent scaffold for the binding of YTHDF proteins, juxtaposing their disordered regions and thereby leading to phase separation (By similarity). The resulting mRNA-YTHDF complexes then partition into different endogenous phase-separated membraneless compartments, such as P-bodies, stress granules or neuronal RNA granules (By similarity). May also recognize and bind RNAs modified by C5-methylcytosine (m5C) and act as a regulator of rRNA processing (By similarity).</text>
</comment>
<comment type="subunit">
    <text evidence="2 11">Interacts with CNOT1; interaction is direct and promotes recruitment of the CCR4-NOT complex (PubMed:32905781). Interacts with YTHDF3 (By similarity). Interacts with RIDA/HRSP12; interaction leads to recruitment of the ribonuclease P/MRP complex (By similarity).</text>
</comment>
<comment type="subcellular location">
    <subcellularLocation>
        <location evidence="15 16">Cytoplasm</location>
        <location evidence="15 16">Cytosol</location>
    </subcellularLocation>
    <subcellularLocation>
        <location evidence="2">Cytoplasm</location>
        <location evidence="2">P-body</location>
    </subcellularLocation>
    <subcellularLocation>
        <location evidence="2">Cytoplasm</location>
        <location evidence="2">Stress granule</location>
    </subcellularLocation>
    <subcellularLocation>
        <location evidence="12">Nucleus</location>
    </subcellularLocation>
    <text evidence="2">Localizes to the cytosol and relocates to the nucleus following heat shock stress. Can partition into different structures: into P-bodies in unstressed cells, and into stress granules during stress.</text>
</comment>
<comment type="tissue specificity">
    <text evidence="5">Widely expressed, with highest expression in testis.</text>
</comment>
<comment type="developmental stage">
    <text evidence="5">Expressed in the germline during gametogenesis: expressed at all stages of spermatogenesis, with elevated expression observed in pachytene spermatocytes (PubMed:28867294). During oogenesis, expressed at all stages of folliculogenesis: expressed both in the oocyte and in somatic granulosa cells (PubMed:28867294). Also expressed during oocyte maturation, with abundant expression in germinal vesicle as well as in meiosis II oocytes (PubMed:28867294).</text>
</comment>
<comment type="domain">
    <text evidence="2">The disordered regions have the ability to interact with each other and to 'phase separate' into liquid droplets within the cytosol following binding to mRNAs containing multiple m6A-modified residues. This leads to the partition of m6A-containing mRNAs into membraneless compartments, where mRNAs may be stored, degraded or used to transport mRNAs to dendritic arbors in neurons.</text>
</comment>
<comment type="PTM">
    <text evidence="2">Ubiquitinated by the SCF(SKP2) complex, leading to its degradation.</text>
</comment>
<comment type="disruption phenotype">
    <text evidence="5 6 7 8 10 12">Female are infertile despite successful ovulation (PubMed:28867294, PubMed:32943573). Corpora lutea is present in ovaries, indicating that ovulation has occurred (PubMed:28867294). Defects during oocyte maturation are probably caused by the deregulation of some transcripts, leading to an arrest prior to or at the two-cell stage, with various cytokinesis defects observed in the two-cell embryos (PubMed:28867294). Males are hypofertile because of mild degenerative changes in the seminiferous tubules, including large scattered vacuoles in Sertoli cells and severe loss of sperm in the cauda epididymis (PubMed:32943573). Conditional deletion in embryos leads to lethality at late embryonic developmental stages, caused by defects in neural development (PubMed:29855337). Conditional deletion in spermatogonia leads to impaired spermatogonial proliferation caused by decreased cell spread (PubMed:31959747). The proliferation and differentiation capabilities of neural stem/progenitor cell (NSPC) decrease significantly in conditional deletion mutant embryos (PubMed:29855337). Conditional deletion in hematopoietic stem cells promotes hematopoietic stem cell expansion (PubMed:30065315, PubMed:30150673). Mice lacking Ythdf1, Ythdf2 and Ythdf3 display early embryonic lethality and show defects in embryonic stem cell differentiation (PubMed:32943573).</text>
</comment>
<comment type="similarity">
    <text evidence="14">Belongs to the YTHDF family. YTHDF2 subfamily.</text>
</comment>
<comment type="caution">
    <text evidence="2 12">Previous studies suggested the 3 different paralogs (YTHDF1, YTHDF2 and YTHDF3) have unique functions with limited redundancy (By similarity). However, later studies showed that YTHDF1, YTHDF2 and YTHDF3 paralogs have redundant functions to a profound extent and directly promote degradation of m6A-containing mRNAs (PubMed:32943573).</text>
</comment>
<sequence length="579" mass="62280">MSASSLLEQRPKGQGNKVQNGSVHQKDGLNDDDFEPYLSPQARPNNAYTAMSDSYLPSYYSPSIGFSYSLGEAAWSTGGDTAMPYLTSYGQLSNGEPHFLPDAMFGQPGALGSTPFLGQHGFNFFPSGIDFSAWGNNSSQGQSTQSSGYSSNYAYAPSSLGGAMIDGQSAFANETLNKAPGMNTIDQGMAALKLGSTEVASSVPKVVGSAVGSGSITSNIVASSSLPPATIAPPKPASWADIASKPAKQQPKLKTKNGIAGSSLPPPPIKHNMDIGTWDNKGPVAKAPSQALVQNIGQPTQGSPQPVGQQANNSPPVAQASVGQQTQPLPPPPPQPAQLSVQQQAAQPTRWVAPRNRGSGFGHNGVDGNGVGQSQAGSGSTPSEPHPVLEKLRSINNYNPKDFDWNLKHGRVFIIKSYSEDDIHRSIKYNIWCSTEHGNKRLDAAYRSMNGKGPVYLLFSVNGSGHFCGVAEMKSAVDYNTCAGVWSQDKWKGRFDVRWIFVKDVPNSQLRHIRLENNENKPVTNSRDTQEVPLEKAKQVLKIIASYKHTTSIFDDFSHYEKRQEEEESVKKERQGRGK</sequence>
<protein>
    <recommendedName>
        <fullName evidence="14">YTH domain-containing family protein 2</fullName>
    </recommendedName>
</protein>
<proteinExistence type="evidence at protein level"/>